<protein>
    <recommendedName>
        <fullName evidence="1">Probable [Fe-S]-dependent transcriptional repressor</fullName>
    </recommendedName>
</protein>
<organism>
    <name type="scientific">Escherichia coli O17:K52:H18 (strain UMN026 / ExPEC)</name>
    <dbReference type="NCBI Taxonomy" id="585056"/>
    <lineage>
        <taxon>Bacteria</taxon>
        <taxon>Pseudomonadati</taxon>
        <taxon>Pseudomonadota</taxon>
        <taxon>Gammaproteobacteria</taxon>
        <taxon>Enterobacterales</taxon>
        <taxon>Enterobacteriaceae</taxon>
        <taxon>Escherichia</taxon>
    </lineage>
</organism>
<keyword id="KW-0238">DNA-binding</keyword>
<keyword id="KW-0408">Iron</keyword>
<keyword id="KW-0411">Iron-sulfur</keyword>
<keyword id="KW-0479">Metal-binding</keyword>
<keyword id="KW-0678">Repressor</keyword>
<keyword id="KW-0804">Transcription</keyword>
<keyword id="KW-0805">Transcription regulation</keyword>
<gene>
    <name evidence="1" type="primary">feoC</name>
    <name type="ordered locus">ECUMN_3869</name>
</gene>
<accession>B7NE15</accession>
<name>FEOC_ECOLU</name>
<feature type="chain" id="PRO_1000201323" description="Probable [Fe-S]-dependent transcriptional repressor">
    <location>
        <begin position="1"/>
        <end position="78"/>
    </location>
</feature>
<feature type="binding site" evidence="1">
    <location>
        <position position="56"/>
    </location>
    <ligand>
        <name>iron-sulfur cluster</name>
        <dbReference type="ChEBI" id="CHEBI:30408"/>
    </ligand>
</feature>
<feature type="binding site" evidence="1">
    <location>
        <position position="61"/>
    </location>
    <ligand>
        <name>iron-sulfur cluster</name>
        <dbReference type="ChEBI" id="CHEBI:30408"/>
    </ligand>
</feature>
<feature type="binding site" evidence="1">
    <location>
        <position position="64"/>
    </location>
    <ligand>
        <name>iron-sulfur cluster</name>
        <dbReference type="ChEBI" id="CHEBI:30408"/>
    </ligand>
</feature>
<feature type="binding site" evidence="1">
    <location>
        <position position="70"/>
    </location>
    <ligand>
        <name>iron-sulfur cluster</name>
        <dbReference type="ChEBI" id="CHEBI:30408"/>
    </ligand>
</feature>
<comment type="function">
    <text evidence="1">May function as a transcriptional regulator that controls feoABC expression.</text>
</comment>
<comment type="similarity">
    <text evidence="1">Belongs to the FeoC family.</text>
</comment>
<reference key="1">
    <citation type="journal article" date="2009" name="PLoS Genet.">
        <title>Organised genome dynamics in the Escherichia coli species results in highly diverse adaptive paths.</title>
        <authorList>
            <person name="Touchon M."/>
            <person name="Hoede C."/>
            <person name="Tenaillon O."/>
            <person name="Barbe V."/>
            <person name="Baeriswyl S."/>
            <person name="Bidet P."/>
            <person name="Bingen E."/>
            <person name="Bonacorsi S."/>
            <person name="Bouchier C."/>
            <person name="Bouvet O."/>
            <person name="Calteau A."/>
            <person name="Chiapello H."/>
            <person name="Clermont O."/>
            <person name="Cruveiller S."/>
            <person name="Danchin A."/>
            <person name="Diard M."/>
            <person name="Dossat C."/>
            <person name="Karoui M.E."/>
            <person name="Frapy E."/>
            <person name="Garry L."/>
            <person name="Ghigo J.M."/>
            <person name="Gilles A.M."/>
            <person name="Johnson J."/>
            <person name="Le Bouguenec C."/>
            <person name="Lescat M."/>
            <person name="Mangenot S."/>
            <person name="Martinez-Jehanne V."/>
            <person name="Matic I."/>
            <person name="Nassif X."/>
            <person name="Oztas S."/>
            <person name="Petit M.A."/>
            <person name="Pichon C."/>
            <person name="Rouy Z."/>
            <person name="Ruf C.S."/>
            <person name="Schneider D."/>
            <person name="Tourret J."/>
            <person name="Vacherie B."/>
            <person name="Vallenet D."/>
            <person name="Medigue C."/>
            <person name="Rocha E.P.C."/>
            <person name="Denamur E."/>
        </authorList>
    </citation>
    <scope>NUCLEOTIDE SEQUENCE [LARGE SCALE GENOMIC DNA]</scope>
    <source>
        <strain>UMN026 / ExPEC</strain>
    </source>
</reference>
<proteinExistence type="inferred from homology"/>
<evidence type="ECO:0000255" key="1">
    <source>
        <dbReference type="HAMAP-Rule" id="MF_01586"/>
    </source>
</evidence>
<dbReference type="EMBL" id="CU928163">
    <property type="protein sequence ID" value="CAR15015.1"/>
    <property type="molecule type" value="Genomic_DNA"/>
</dbReference>
<dbReference type="RefSeq" id="WP_001306319.1">
    <property type="nucleotide sequence ID" value="NC_011751.1"/>
</dbReference>
<dbReference type="RefSeq" id="YP_002414520.1">
    <property type="nucleotide sequence ID" value="NC_011751.1"/>
</dbReference>
<dbReference type="SMR" id="B7NE15"/>
<dbReference type="STRING" id="585056.ECUMN_3869"/>
<dbReference type="KEGG" id="eum:ECUMN_3869"/>
<dbReference type="PATRIC" id="fig|585056.7.peg.4042"/>
<dbReference type="HOGENOM" id="CLU_189182_0_0_6"/>
<dbReference type="Proteomes" id="UP000007097">
    <property type="component" value="Chromosome"/>
</dbReference>
<dbReference type="GO" id="GO:0003677">
    <property type="term" value="F:DNA binding"/>
    <property type="evidence" value="ECO:0007669"/>
    <property type="project" value="UniProtKB-KW"/>
</dbReference>
<dbReference type="GO" id="GO:0005506">
    <property type="term" value="F:iron ion binding"/>
    <property type="evidence" value="ECO:0007669"/>
    <property type="project" value="UniProtKB-UniRule"/>
</dbReference>
<dbReference type="GO" id="GO:0051536">
    <property type="term" value="F:iron-sulfur cluster binding"/>
    <property type="evidence" value="ECO:0007669"/>
    <property type="project" value="UniProtKB-KW"/>
</dbReference>
<dbReference type="Gene3D" id="1.10.10.10">
    <property type="entry name" value="Winged helix-like DNA-binding domain superfamily/Winged helix DNA-binding domain"/>
    <property type="match status" value="1"/>
</dbReference>
<dbReference type="HAMAP" id="MF_01586">
    <property type="entry name" value="FeoC"/>
    <property type="match status" value="1"/>
</dbReference>
<dbReference type="InterPro" id="IPR023732">
    <property type="entry name" value="FeoC"/>
</dbReference>
<dbReference type="InterPro" id="IPR015102">
    <property type="entry name" value="Tscrpt_reg_HTH_FeoC"/>
</dbReference>
<dbReference type="InterPro" id="IPR036388">
    <property type="entry name" value="WH-like_DNA-bd_sf"/>
</dbReference>
<dbReference type="InterPro" id="IPR036390">
    <property type="entry name" value="WH_DNA-bd_sf"/>
</dbReference>
<dbReference type="NCBIfam" id="NF011960">
    <property type="entry name" value="PRK15431.1"/>
    <property type="match status" value="1"/>
</dbReference>
<dbReference type="Pfam" id="PF09012">
    <property type="entry name" value="FeoC"/>
    <property type="match status" value="1"/>
</dbReference>
<dbReference type="SUPFAM" id="SSF46785">
    <property type="entry name" value="Winged helix' DNA-binding domain"/>
    <property type="match status" value="1"/>
</dbReference>
<sequence length="78" mass="8630">MASLIQVRDLLALRGRMEAAQISQALNTPQPMINAMLQQLESMGKAVRIQEEPDGCLSGSCKSCPEGKACLREWWALR</sequence>